<protein>
    <recommendedName>
        <fullName>Somatostatin receptor type 5</fullName>
        <shortName>SS-5-R</shortName>
        <shortName>SS5-R</shortName>
        <shortName>SS5R</shortName>
    </recommendedName>
</protein>
<name>SSR5_RAT</name>
<reference key="1">
    <citation type="journal article" date="1992" name="Mol. Pharmacol.">
        <title>Molecular cloning and expression of a pituitary somatostatin receptor with preferential affinity for somatostatin-28.</title>
        <authorList>
            <person name="O'Carroll A.-M."/>
            <person name="Lolait S.J."/>
            <person name="Konig M."/>
            <person name="Mahan L.C."/>
        </authorList>
    </citation>
    <scope>NUCLEOTIDE SEQUENCE [MRNA]</scope>
    <scope>FUNCTION</scope>
    <scope>TISSUE SPECIFICITY</scope>
    <source>
        <tissue>Pituitary</tissue>
    </source>
</reference>
<reference key="2">
    <citation type="journal article" date="1994" name="Mol. Pharmacol.">
        <title>Molecular cloning, functional characterization, and chromosomal localization of a human somatostatin receptor (somatostatin receptor type 5) with preferential affinity for somatostatin-28.</title>
        <authorList>
            <person name="Panetta R."/>
            <person name="Greenwood M.T."/>
            <person name="Warszynska A."/>
            <person name="Demchyshyn L.L."/>
            <person name="Day R."/>
            <person name="Niznik H.B."/>
            <person name="Srikant C.B."/>
            <person name="Patel Y.C."/>
        </authorList>
    </citation>
    <scope>SEQUENCE REVISION TO C-TERMINUS</scope>
    <scope>FUNCTION</scope>
    <scope>TISSUE SPECIFICITY</scope>
    <source>
        <tissue>Pituitary</tissue>
    </source>
</reference>
<reference key="3">
    <citation type="journal article" date="2011" name="FEBS Lett.">
        <title>Somatostatin receptor 5 is palmitoylated by the interacting ZDHHC5 palmitoyltransferase.</title>
        <authorList>
            <person name="Kokkola T."/>
            <person name="Kruse C."/>
            <person name="Roy-Pogodzik E.M."/>
            <person name="Pekkinen J."/>
            <person name="Bauch C."/>
            <person name="Honck H.H."/>
            <person name="Hennemann H."/>
            <person name="Kreienkamp H.J."/>
        </authorList>
    </citation>
    <scope>INTERACTION WITH ZDHHC5</scope>
</reference>
<sequence length="363" mass="39971">MEPLSLASTPSWNASAASSGNHNWSLVGSASPMGARAVLVPVLYLLVCTVGLSGNTLVIYVVLRHAKMKTVTNVYILNLAVADVLFMLGLPFLATQNAVVSYWPFGSFLCRLVMTLDGINQFTSIFCLMVMSVDRYLAVVHPLRSARWRRPRVAKMASAAVWVFSLLMSLPLLVFADVQEGWGTCNLSWPEPVGLWGAAFITYTSVLGFFGPLLVICLCYLLIVVKVKAAGMRVGSSRRRRSEPKVTRMVVVVVLVFVGCWLPFFIVNIVNLAFTLPEEPTSAGLYFFVVVLSYANSCANPLLYGFLSDNFRQSFRKVLCLRRGYGMEDADAIEPRPDKSGRPQATLPTRSCEANGLMQTSRI</sequence>
<keyword id="KW-1003">Cell membrane</keyword>
<keyword id="KW-1015">Disulfide bond</keyword>
<keyword id="KW-0297">G-protein coupled receptor</keyword>
<keyword id="KW-0325">Glycoprotein</keyword>
<keyword id="KW-0449">Lipoprotein</keyword>
<keyword id="KW-0472">Membrane</keyword>
<keyword id="KW-0564">Palmitate</keyword>
<keyword id="KW-0675">Receptor</keyword>
<keyword id="KW-1185">Reference proteome</keyword>
<keyword id="KW-0807">Transducer</keyword>
<keyword id="KW-0812">Transmembrane</keyword>
<keyword id="KW-1133">Transmembrane helix</keyword>
<accession>P30938</accession>
<proteinExistence type="evidence at protein level"/>
<comment type="function">
    <text evidence="5 6">Receptor for somatostatin-28. The activity of this receptor is mediated by G proteins which inhibit adenylyl cyclase. Increases cell growth inhibition activity of SSTR2 following heterodimerization.</text>
</comment>
<comment type="subunit">
    <text evidence="1">Heterodimer with SSTR2. Heterodimerization with SSTR2 increases cell growth inhibition activity of SSTR2 (By similarity).</text>
</comment>
<comment type="subcellular location">
    <subcellularLocation>
        <location>Cell membrane</location>
        <topology>Multi-pass membrane protein</topology>
    </subcellularLocation>
</comment>
<comment type="tissue specificity">
    <text evidence="5 6">Prominent in the pituitary and small intestine. Low levels in islets and spleen. Not detected in kidney, pancreas, cerebellum, or cortex.</text>
</comment>
<comment type="PTM">
    <text evidence="1">Palmitoylated at Cys-320 by ZDHHC5, but not ZDHHC8. Palmitoylation creates an additional intracellular loop which is thought to be important for efficient coupling to G-proteins and may target the protein to lipid rafts (By similarity).</text>
</comment>
<comment type="similarity">
    <text evidence="3">Belongs to the G-protein coupled receptor 1 family.</text>
</comment>
<evidence type="ECO:0000250" key="1"/>
<evidence type="ECO:0000255" key="2"/>
<evidence type="ECO:0000255" key="3">
    <source>
        <dbReference type="PROSITE-ProRule" id="PRU00521"/>
    </source>
</evidence>
<evidence type="ECO:0000256" key="4">
    <source>
        <dbReference type="SAM" id="MobiDB-lite"/>
    </source>
</evidence>
<evidence type="ECO:0000269" key="5">
    <source>
    </source>
</evidence>
<evidence type="ECO:0000269" key="6">
    <source>
    </source>
</evidence>
<dbReference type="EMBL" id="L04535">
    <property type="protein sequence ID" value="AAA17029.1"/>
    <property type="molecule type" value="mRNA"/>
</dbReference>
<dbReference type="EMBL" id="U01152">
    <property type="protein sequence ID" value="AAC09011.1"/>
    <property type="molecule type" value="mRNA"/>
</dbReference>
<dbReference type="EMBL" id="X74828">
    <property type="protein sequence ID" value="CAA52825.1"/>
    <property type="molecule type" value="mRNA"/>
</dbReference>
<dbReference type="PIR" id="I57940">
    <property type="entry name" value="I57940"/>
</dbReference>
<dbReference type="SMR" id="P30938"/>
<dbReference type="CORUM" id="P30938"/>
<dbReference type="FunCoup" id="P30938">
    <property type="interactions" value="113"/>
</dbReference>
<dbReference type="IntAct" id="P30938">
    <property type="interactions" value="1"/>
</dbReference>
<dbReference type="MINT" id="P30938"/>
<dbReference type="STRING" id="10116.ENSRNOP00000025451"/>
<dbReference type="BindingDB" id="P30938"/>
<dbReference type="ChEMBL" id="CHEMBL4318"/>
<dbReference type="DrugCentral" id="P30938"/>
<dbReference type="GuidetoPHARMACOLOGY" id="359"/>
<dbReference type="GlyCosmos" id="P30938">
    <property type="glycosylation" value="3 sites, No reported glycans"/>
</dbReference>
<dbReference type="GlyGen" id="P30938">
    <property type="glycosylation" value="5 sites"/>
</dbReference>
<dbReference type="PhosphoSitePlus" id="P30938"/>
<dbReference type="PaxDb" id="10116-ENSRNOP00000025451"/>
<dbReference type="UCSC" id="RGD:3765">
    <property type="organism name" value="rat"/>
</dbReference>
<dbReference type="AGR" id="RGD:3765"/>
<dbReference type="RGD" id="3765">
    <property type="gene designation" value="Sstr5"/>
</dbReference>
<dbReference type="eggNOG" id="KOG3656">
    <property type="taxonomic scope" value="Eukaryota"/>
</dbReference>
<dbReference type="InParanoid" id="P30938"/>
<dbReference type="PhylomeDB" id="P30938"/>
<dbReference type="Reactome" id="R-RNO-375276">
    <property type="pathway name" value="Peptide ligand-binding receptors"/>
</dbReference>
<dbReference type="Reactome" id="R-RNO-418594">
    <property type="pathway name" value="G alpha (i) signalling events"/>
</dbReference>
<dbReference type="PRO" id="PR:P30938"/>
<dbReference type="Proteomes" id="UP000002494">
    <property type="component" value="Unplaced"/>
</dbReference>
<dbReference type="GO" id="GO:0043005">
    <property type="term" value="C:neuron projection"/>
    <property type="evidence" value="ECO:0000318"/>
    <property type="project" value="GO_Central"/>
</dbReference>
<dbReference type="GO" id="GO:0005886">
    <property type="term" value="C:plasma membrane"/>
    <property type="evidence" value="ECO:0000266"/>
    <property type="project" value="RGD"/>
</dbReference>
<dbReference type="GO" id="GO:0042923">
    <property type="term" value="F:neuropeptide binding"/>
    <property type="evidence" value="ECO:0000318"/>
    <property type="project" value="GO_Central"/>
</dbReference>
<dbReference type="GO" id="GO:0004994">
    <property type="term" value="F:somatostatin receptor activity"/>
    <property type="evidence" value="ECO:0000314"/>
    <property type="project" value="RGD"/>
</dbReference>
<dbReference type="GO" id="GO:0007193">
    <property type="term" value="P:adenylate cyclase-inhibiting G protein-coupled receptor signaling pathway"/>
    <property type="evidence" value="ECO:0000314"/>
    <property type="project" value="RGD"/>
</dbReference>
<dbReference type="GO" id="GO:0071385">
    <property type="term" value="P:cellular response to glucocorticoid stimulus"/>
    <property type="evidence" value="ECO:0000270"/>
    <property type="project" value="RGD"/>
</dbReference>
<dbReference type="GO" id="GO:0042593">
    <property type="term" value="P:glucose homeostasis"/>
    <property type="evidence" value="ECO:0000266"/>
    <property type="project" value="RGD"/>
</dbReference>
<dbReference type="GO" id="GO:0007218">
    <property type="term" value="P:neuropeptide signaling pathway"/>
    <property type="evidence" value="ECO:0000318"/>
    <property type="project" value="GO_Central"/>
</dbReference>
<dbReference type="GO" id="GO:0032467">
    <property type="term" value="P:positive regulation of cytokinesis"/>
    <property type="evidence" value="ECO:0000266"/>
    <property type="project" value="RGD"/>
</dbReference>
<dbReference type="GO" id="GO:0050796">
    <property type="term" value="P:regulation of insulin secretion"/>
    <property type="evidence" value="ECO:0000266"/>
    <property type="project" value="RGD"/>
</dbReference>
<dbReference type="FunFam" id="1.20.1070.10:FF:000039">
    <property type="entry name" value="somatostatin receptor type 2"/>
    <property type="match status" value="1"/>
</dbReference>
<dbReference type="Gene3D" id="1.20.1070.10">
    <property type="entry name" value="Rhodopsin 7-helix transmembrane proteins"/>
    <property type="match status" value="1"/>
</dbReference>
<dbReference type="InterPro" id="IPR000276">
    <property type="entry name" value="GPCR_Rhodpsn"/>
</dbReference>
<dbReference type="InterPro" id="IPR017452">
    <property type="entry name" value="GPCR_Rhodpsn_7TM"/>
</dbReference>
<dbReference type="InterPro" id="IPR000586">
    <property type="entry name" value="Somatstn_rcpt"/>
</dbReference>
<dbReference type="InterPro" id="IPR001184">
    <property type="entry name" value="Somatstn_rcpt_5"/>
</dbReference>
<dbReference type="PANTHER" id="PTHR24229">
    <property type="entry name" value="NEUROPEPTIDES RECEPTOR"/>
    <property type="match status" value="1"/>
</dbReference>
<dbReference type="PANTHER" id="PTHR24229:SF20">
    <property type="entry name" value="SOMATOSTATIN RECEPTOR TYPE 5"/>
    <property type="match status" value="1"/>
</dbReference>
<dbReference type="Pfam" id="PF00001">
    <property type="entry name" value="7tm_1"/>
    <property type="match status" value="1"/>
</dbReference>
<dbReference type="PRINTS" id="PR00237">
    <property type="entry name" value="GPCRRHODOPSN"/>
</dbReference>
<dbReference type="PRINTS" id="PR00246">
    <property type="entry name" value="SOMATOSTATNR"/>
</dbReference>
<dbReference type="PRINTS" id="PR00591">
    <property type="entry name" value="SOMATOSTTN5R"/>
</dbReference>
<dbReference type="SMART" id="SM01381">
    <property type="entry name" value="7TM_GPCR_Srsx"/>
    <property type="match status" value="1"/>
</dbReference>
<dbReference type="SUPFAM" id="SSF81321">
    <property type="entry name" value="Family A G protein-coupled receptor-like"/>
    <property type="match status" value="1"/>
</dbReference>
<dbReference type="PROSITE" id="PS00237">
    <property type="entry name" value="G_PROTEIN_RECEP_F1_1"/>
    <property type="match status" value="1"/>
</dbReference>
<dbReference type="PROSITE" id="PS50262">
    <property type="entry name" value="G_PROTEIN_RECEP_F1_2"/>
    <property type="match status" value="1"/>
</dbReference>
<organism>
    <name type="scientific">Rattus norvegicus</name>
    <name type="common">Rat</name>
    <dbReference type="NCBI Taxonomy" id="10116"/>
    <lineage>
        <taxon>Eukaryota</taxon>
        <taxon>Metazoa</taxon>
        <taxon>Chordata</taxon>
        <taxon>Craniata</taxon>
        <taxon>Vertebrata</taxon>
        <taxon>Euteleostomi</taxon>
        <taxon>Mammalia</taxon>
        <taxon>Eutheria</taxon>
        <taxon>Euarchontoglires</taxon>
        <taxon>Glires</taxon>
        <taxon>Rodentia</taxon>
        <taxon>Myomorpha</taxon>
        <taxon>Muroidea</taxon>
        <taxon>Muridae</taxon>
        <taxon>Murinae</taxon>
        <taxon>Rattus</taxon>
    </lineage>
</organism>
<gene>
    <name type="primary">Sstr5</name>
</gene>
<feature type="chain" id="PRO_0000070132" description="Somatostatin receptor type 5">
    <location>
        <begin position="1"/>
        <end position="363"/>
    </location>
</feature>
<feature type="topological domain" description="Extracellular" evidence="2">
    <location>
        <begin position="1"/>
        <end position="35"/>
    </location>
</feature>
<feature type="transmembrane region" description="Helical; Name=1" evidence="2">
    <location>
        <begin position="36"/>
        <end position="63"/>
    </location>
</feature>
<feature type="topological domain" description="Cytoplasmic" evidence="2">
    <location>
        <begin position="64"/>
        <end position="73"/>
    </location>
</feature>
<feature type="transmembrane region" description="Helical; Name=2" evidence="2">
    <location>
        <begin position="74"/>
        <end position="99"/>
    </location>
</feature>
<feature type="topological domain" description="Extracellular" evidence="2">
    <location>
        <begin position="100"/>
        <end position="111"/>
    </location>
</feature>
<feature type="transmembrane region" description="Helical; Name=3" evidence="2">
    <location>
        <begin position="112"/>
        <end position="133"/>
    </location>
</feature>
<feature type="topological domain" description="Cytoplasmic" evidence="2">
    <location>
        <begin position="134"/>
        <end position="155"/>
    </location>
</feature>
<feature type="transmembrane region" description="Helical; Name=4" evidence="2">
    <location>
        <begin position="156"/>
        <end position="176"/>
    </location>
</feature>
<feature type="topological domain" description="Extracellular" evidence="2">
    <location>
        <begin position="177"/>
        <end position="196"/>
    </location>
</feature>
<feature type="transmembrane region" description="Helical; Name=5" evidence="2">
    <location>
        <begin position="197"/>
        <end position="221"/>
    </location>
</feature>
<feature type="topological domain" description="Cytoplasmic" evidence="2">
    <location>
        <begin position="222"/>
        <end position="247"/>
    </location>
</feature>
<feature type="transmembrane region" description="Helical; Name=6" evidence="2">
    <location>
        <begin position="248"/>
        <end position="273"/>
    </location>
</feature>
<feature type="topological domain" description="Extracellular" evidence="2">
    <location>
        <begin position="274"/>
        <end position="283"/>
    </location>
</feature>
<feature type="transmembrane region" description="Helical; Name=7" evidence="2">
    <location>
        <begin position="284"/>
        <end position="308"/>
    </location>
</feature>
<feature type="topological domain" description="Cytoplasmic" evidence="2">
    <location>
        <begin position="309"/>
        <end position="363"/>
    </location>
</feature>
<feature type="region of interest" description="Disordered" evidence="4">
    <location>
        <begin position="331"/>
        <end position="363"/>
    </location>
</feature>
<feature type="lipid moiety-binding region" description="S-palmitoyl cysteine; by ZDHHC5" evidence="1">
    <location>
        <position position="320"/>
    </location>
</feature>
<feature type="glycosylation site" description="N-linked (GlcNAc...) asparagine" evidence="2">
    <location>
        <position position="13"/>
    </location>
</feature>
<feature type="glycosylation site" description="N-linked (GlcNAc...) asparagine" evidence="2">
    <location>
        <position position="23"/>
    </location>
</feature>
<feature type="glycosylation site" description="N-linked (GlcNAc...) asparagine" evidence="2">
    <location>
        <position position="186"/>
    </location>
</feature>
<feature type="disulfide bond" evidence="3">
    <location>
        <begin position="110"/>
        <end position="185"/>
    </location>
</feature>